<protein>
    <recommendedName>
        <fullName evidence="1">Porphobilinogen deaminase</fullName>
        <shortName evidence="1">PBG</shortName>
        <ecNumber evidence="1">2.5.1.61</ecNumber>
    </recommendedName>
    <alternativeName>
        <fullName evidence="1">Hydroxymethylbilane synthase</fullName>
        <shortName evidence="1">HMBS</shortName>
    </alternativeName>
    <alternativeName>
        <fullName evidence="1">Pre-uroporphyrinogen synthase</fullName>
    </alternativeName>
</protein>
<dbReference type="EC" id="2.5.1.61" evidence="1"/>
<dbReference type="EMBL" id="AP006627">
    <property type="protein sequence ID" value="BAD65165.1"/>
    <property type="molecule type" value="Genomic_DNA"/>
</dbReference>
<dbReference type="RefSeq" id="WP_011247473.1">
    <property type="nucleotide sequence ID" value="NC_006582.1"/>
</dbReference>
<dbReference type="SMR" id="Q5WEP5"/>
<dbReference type="STRING" id="66692.ABC2630"/>
<dbReference type="KEGG" id="bcl:ABC2630"/>
<dbReference type="eggNOG" id="COG0181">
    <property type="taxonomic scope" value="Bacteria"/>
</dbReference>
<dbReference type="HOGENOM" id="CLU_019704_0_2_9"/>
<dbReference type="OrthoDB" id="9810298at2"/>
<dbReference type="UniPathway" id="UPA00251">
    <property type="reaction ID" value="UER00319"/>
</dbReference>
<dbReference type="Proteomes" id="UP000001168">
    <property type="component" value="Chromosome"/>
</dbReference>
<dbReference type="GO" id="GO:0005737">
    <property type="term" value="C:cytoplasm"/>
    <property type="evidence" value="ECO:0007669"/>
    <property type="project" value="TreeGrafter"/>
</dbReference>
<dbReference type="GO" id="GO:0004418">
    <property type="term" value="F:hydroxymethylbilane synthase activity"/>
    <property type="evidence" value="ECO:0007669"/>
    <property type="project" value="UniProtKB-UniRule"/>
</dbReference>
<dbReference type="GO" id="GO:0006782">
    <property type="term" value="P:protoporphyrinogen IX biosynthetic process"/>
    <property type="evidence" value="ECO:0007669"/>
    <property type="project" value="UniProtKB-UniRule"/>
</dbReference>
<dbReference type="CDD" id="cd13646">
    <property type="entry name" value="PBP2_EcHMBS_like"/>
    <property type="match status" value="1"/>
</dbReference>
<dbReference type="FunFam" id="3.30.160.40:FF:000001">
    <property type="entry name" value="Porphobilinogen deaminase"/>
    <property type="match status" value="1"/>
</dbReference>
<dbReference type="FunFam" id="3.40.190.10:FF:000004">
    <property type="entry name" value="Porphobilinogen deaminase"/>
    <property type="match status" value="1"/>
</dbReference>
<dbReference type="FunFam" id="3.40.190.10:FF:000005">
    <property type="entry name" value="Porphobilinogen deaminase"/>
    <property type="match status" value="1"/>
</dbReference>
<dbReference type="Gene3D" id="3.40.190.10">
    <property type="entry name" value="Periplasmic binding protein-like II"/>
    <property type="match status" value="2"/>
</dbReference>
<dbReference type="Gene3D" id="3.30.160.40">
    <property type="entry name" value="Porphobilinogen deaminase, C-terminal domain"/>
    <property type="match status" value="1"/>
</dbReference>
<dbReference type="HAMAP" id="MF_00260">
    <property type="entry name" value="Porphobil_deam"/>
    <property type="match status" value="1"/>
</dbReference>
<dbReference type="InterPro" id="IPR000860">
    <property type="entry name" value="HemC"/>
</dbReference>
<dbReference type="InterPro" id="IPR022419">
    <property type="entry name" value="Porphobilin_deaminase_cofac_BS"/>
</dbReference>
<dbReference type="InterPro" id="IPR022417">
    <property type="entry name" value="Porphobilin_deaminase_N"/>
</dbReference>
<dbReference type="InterPro" id="IPR022418">
    <property type="entry name" value="Porphobilinogen_deaminase_C"/>
</dbReference>
<dbReference type="InterPro" id="IPR036803">
    <property type="entry name" value="Porphobilinogen_deaminase_C_sf"/>
</dbReference>
<dbReference type="NCBIfam" id="TIGR00212">
    <property type="entry name" value="hemC"/>
    <property type="match status" value="1"/>
</dbReference>
<dbReference type="PANTHER" id="PTHR11557">
    <property type="entry name" value="PORPHOBILINOGEN DEAMINASE"/>
    <property type="match status" value="1"/>
</dbReference>
<dbReference type="PANTHER" id="PTHR11557:SF0">
    <property type="entry name" value="PORPHOBILINOGEN DEAMINASE"/>
    <property type="match status" value="1"/>
</dbReference>
<dbReference type="Pfam" id="PF01379">
    <property type="entry name" value="Porphobil_deam"/>
    <property type="match status" value="1"/>
</dbReference>
<dbReference type="Pfam" id="PF03900">
    <property type="entry name" value="Porphobil_deamC"/>
    <property type="match status" value="1"/>
</dbReference>
<dbReference type="PIRSF" id="PIRSF001438">
    <property type="entry name" value="4pyrrol_synth_OHMeBilane_synth"/>
    <property type="match status" value="1"/>
</dbReference>
<dbReference type="PRINTS" id="PR00151">
    <property type="entry name" value="PORPHBDMNASE"/>
</dbReference>
<dbReference type="SUPFAM" id="SSF53850">
    <property type="entry name" value="Periplasmic binding protein-like II"/>
    <property type="match status" value="1"/>
</dbReference>
<dbReference type="SUPFAM" id="SSF54782">
    <property type="entry name" value="Porphobilinogen deaminase (hydroxymethylbilane synthase), C-terminal domain"/>
    <property type="match status" value="1"/>
</dbReference>
<dbReference type="PROSITE" id="PS00533">
    <property type="entry name" value="PORPHOBILINOGEN_DEAM"/>
    <property type="match status" value="1"/>
</dbReference>
<feature type="chain" id="PRO_0000142909" description="Porphobilinogen deaminase">
    <location>
        <begin position="1"/>
        <end position="311"/>
    </location>
</feature>
<feature type="modified residue" description="S-(dipyrrolylmethanemethyl)cysteine" evidence="1">
    <location>
        <position position="241"/>
    </location>
</feature>
<name>HEM3_SHOC1</name>
<organism>
    <name type="scientific">Shouchella clausii (strain KSM-K16)</name>
    <name type="common">Alkalihalobacillus clausii</name>
    <dbReference type="NCBI Taxonomy" id="66692"/>
    <lineage>
        <taxon>Bacteria</taxon>
        <taxon>Bacillati</taxon>
        <taxon>Bacillota</taxon>
        <taxon>Bacilli</taxon>
        <taxon>Bacillales</taxon>
        <taxon>Bacillaceae</taxon>
        <taxon>Shouchella</taxon>
    </lineage>
</organism>
<proteinExistence type="inferred from homology"/>
<gene>
    <name evidence="1" type="primary">hemC</name>
    <name type="ordered locus">ABC2630</name>
</gene>
<reference key="1">
    <citation type="submission" date="2003-10" db="EMBL/GenBank/DDBJ databases">
        <title>The complete genome sequence of the alkaliphilic Bacillus clausii KSM-K16.</title>
        <authorList>
            <person name="Takaki Y."/>
            <person name="Kageyama Y."/>
            <person name="Shimamura S."/>
            <person name="Suzuki H."/>
            <person name="Nishi S."/>
            <person name="Hatada Y."/>
            <person name="Kawai S."/>
            <person name="Ito S."/>
            <person name="Horikoshi K."/>
        </authorList>
    </citation>
    <scope>NUCLEOTIDE SEQUENCE [LARGE SCALE GENOMIC DNA]</scope>
    <source>
        <strain>KSM-K16</strain>
    </source>
</reference>
<comment type="function">
    <text evidence="1">Tetrapolymerization of the monopyrrole PBG into the hydroxymethylbilane pre-uroporphyrinogen in several discrete steps.</text>
</comment>
<comment type="catalytic activity">
    <reaction evidence="1">
        <text>4 porphobilinogen + H2O = hydroxymethylbilane + 4 NH4(+)</text>
        <dbReference type="Rhea" id="RHEA:13185"/>
        <dbReference type="ChEBI" id="CHEBI:15377"/>
        <dbReference type="ChEBI" id="CHEBI:28938"/>
        <dbReference type="ChEBI" id="CHEBI:57845"/>
        <dbReference type="ChEBI" id="CHEBI:58126"/>
        <dbReference type="EC" id="2.5.1.61"/>
    </reaction>
</comment>
<comment type="cofactor">
    <cofactor evidence="1">
        <name>dipyrromethane</name>
        <dbReference type="ChEBI" id="CHEBI:60342"/>
    </cofactor>
    <text evidence="1">Binds 1 dipyrromethane group covalently.</text>
</comment>
<comment type="pathway">
    <text evidence="1">Porphyrin-containing compound metabolism; protoporphyrin-IX biosynthesis; coproporphyrinogen-III from 5-aminolevulinate: step 2/4.</text>
</comment>
<comment type="subunit">
    <text evidence="1">Monomer.</text>
</comment>
<comment type="miscellaneous">
    <text evidence="1">The porphobilinogen subunits are added to the dipyrromethane group.</text>
</comment>
<comment type="similarity">
    <text evidence="1">Belongs to the HMBS family.</text>
</comment>
<evidence type="ECO:0000255" key="1">
    <source>
        <dbReference type="HAMAP-Rule" id="MF_00260"/>
    </source>
</evidence>
<sequence length="311" mass="33682">MRKIVIGTRRSKLALTQTNWVIDQLKQLGVPYEFEVKEIVTKGDRILDVTLSKVGGKGLFVKEIEAALRSGEIDVAVHSMKDVPSELLEEFTLAAITEREDPRDVLVSENGHTLDELPAGAIVGTSSLRRSAQILHRRPDVQVKWIRGNVETRLRKLKEEDFSAIVLAAAGLKRLGYGEDVITEYLDKDVCLPAIGQGALGLECRVDDVETTELLAKLHHEETGKAVLAERAFLKEMNGGCQVPIGGYATVLEDGAVFLTGLVGSPDGKTILKEGKCGMVADELGKEVSSLLTAQGAGAILEKVRSELEGS</sequence>
<keyword id="KW-0627">Porphyrin biosynthesis</keyword>
<keyword id="KW-1185">Reference proteome</keyword>
<keyword id="KW-0808">Transferase</keyword>
<accession>Q5WEP5</accession>